<sequence>MGNLFCCVQVDQSTVAIKEQFGKYRDVLEPGCHCVPWFLGSQLAGHLSLRVQQLDVRCETKTKDNVFVNVVASIQYRALADKANEAFYKLSNTKGQIQAYVFDVIRASVPKLNLDDVFEQKNEIAKSVEEELEKAMSAYGYEIVQTLIVDIVPDEHVKRAMNEINAAARLRVAANEKAEAEKILQIKRAEGEAESKYLSGLGIARQRQAIVDGLRDSVLGFSVNVPGTTAKDVMDMVLVTQYFDTMKEIGAASKSSAVFIPHGPGAVKNVAQQIRDGLLQASVGH</sequence>
<reference key="1">
    <citation type="journal article" date="2007" name="Mol. Plant Pathol.">
        <title>The leucine-rich repeat (LRR) protein, CaLRR1, interacts with the hypersensitive induced reaction (HIR) protein, CaHIR1, and suppresses cell death induced by the CaHIR1 protein.</title>
        <authorList>
            <person name="Jung H.W."/>
            <person name="Hwang B.K."/>
        </authorList>
    </citation>
    <scope>NUCLEOTIDE SEQUENCE [MRNA]</scope>
    <scope>FUNCTION</scope>
    <scope>SUBUNIT</scope>
    <scope>INTERACTION WITH LRR1</scope>
    <scope>TISSUE SPECIFICITY</scope>
    <scope>INDUCTION BY PATHOGEN AND HORMONES</scope>
    <scope>MUTAGENESIS OF GLY-2</scope>
</reference>
<evidence type="ECO:0000255" key="1"/>
<evidence type="ECO:0000269" key="2">
    <source>
    </source>
</evidence>
<evidence type="ECO:0000303" key="3">
    <source>
    </source>
</evidence>
<evidence type="ECO:0000312" key="4">
    <source>
        <dbReference type="EMBL" id="AAS98165.1"/>
    </source>
</evidence>
<keyword id="KW-0175">Coiled coil</keyword>
<keyword id="KW-0449">Lipoprotein</keyword>
<keyword id="KW-0519">Myristate</keyword>
<gene>
    <name evidence="3" type="primary">HIR1</name>
    <name evidence="3" type="synonym">LRRIP3</name>
</gene>
<dbReference type="EMBL" id="AY529867">
    <property type="protein sequence ID" value="AAS98165.1"/>
    <property type="molecule type" value="mRNA"/>
</dbReference>
<dbReference type="RefSeq" id="NP_001311766.1">
    <property type="nucleotide sequence ID" value="NM_001324837.1"/>
</dbReference>
<dbReference type="SMR" id="Q5GI04"/>
<dbReference type="GeneID" id="107862499"/>
<dbReference type="KEGG" id="cann:107862499"/>
<dbReference type="OrthoDB" id="434619at2759"/>
<dbReference type="CDD" id="cd03407">
    <property type="entry name" value="SPFH_like_u4"/>
    <property type="match status" value="1"/>
</dbReference>
<dbReference type="FunFam" id="3.30.479.30:FF:000013">
    <property type="entry name" value="Hypersensitive-induced response protein 1"/>
    <property type="match status" value="1"/>
</dbReference>
<dbReference type="Gene3D" id="3.30.479.30">
    <property type="entry name" value="Band 7 domain"/>
    <property type="match status" value="1"/>
</dbReference>
<dbReference type="InterPro" id="IPR050710">
    <property type="entry name" value="Band7/mec-2_domain"/>
</dbReference>
<dbReference type="InterPro" id="IPR001107">
    <property type="entry name" value="Band_7"/>
</dbReference>
<dbReference type="InterPro" id="IPR036013">
    <property type="entry name" value="Band_7/SPFH_dom_sf"/>
</dbReference>
<dbReference type="PANTHER" id="PTHR43327:SF36">
    <property type="entry name" value="HYPERSENSITIVE-INDUCED RESPONSE PROTEIN 1"/>
    <property type="match status" value="1"/>
</dbReference>
<dbReference type="PANTHER" id="PTHR43327">
    <property type="entry name" value="STOMATIN-LIKE PROTEIN 2, MITOCHONDRIAL"/>
    <property type="match status" value="1"/>
</dbReference>
<dbReference type="Pfam" id="PF01145">
    <property type="entry name" value="Band_7"/>
    <property type="match status" value="1"/>
</dbReference>
<dbReference type="SMART" id="SM00244">
    <property type="entry name" value="PHB"/>
    <property type="match status" value="1"/>
</dbReference>
<dbReference type="SUPFAM" id="SSF117892">
    <property type="entry name" value="Band 7/SPFH domain"/>
    <property type="match status" value="1"/>
</dbReference>
<proteinExistence type="evidence at protein level"/>
<accession>Q5GI04</accession>
<protein>
    <recommendedName>
        <fullName evidence="3">Hypersensitive-induced reaction 1 protein</fullName>
        <shortName evidence="3">CaHIR1</shortName>
    </recommendedName>
    <alternativeName>
        <fullName evidence="3">LRR1-interacting protein 3</fullName>
        <shortName evidence="3">CaLRRIP3</shortName>
    </alternativeName>
</protein>
<comment type="function">
    <text evidence="2">Positive regulator of hypersensitive response (HR)-like cell death. May be involved in potassium ion channel regulation.</text>
</comment>
<comment type="subunit">
    <text evidence="2">Homo- and heterodimer. Interacts with LRR1 (via LRR domain).</text>
</comment>
<comment type="tissue specificity">
    <text evidence="2">Constitutively expressed in stems, roots and flowers, but not in leaves and fruits.</text>
</comment>
<comment type="induction">
    <text evidence="2">Up-regulated by pathogens during an incompatible interaction, but not upon infection by a virulent pathogen. Up-regulated by salicylic acid, abscisic acid, ethylene and methyl jasmonate.</text>
</comment>
<organism evidence="4">
    <name type="scientific">Capsicum annuum</name>
    <name type="common">Capsicum pepper</name>
    <dbReference type="NCBI Taxonomy" id="4072"/>
    <lineage>
        <taxon>Eukaryota</taxon>
        <taxon>Viridiplantae</taxon>
        <taxon>Streptophyta</taxon>
        <taxon>Embryophyta</taxon>
        <taxon>Tracheophyta</taxon>
        <taxon>Spermatophyta</taxon>
        <taxon>Magnoliopsida</taxon>
        <taxon>eudicotyledons</taxon>
        <taxon>Gunneridae</taxon>
        <taxon>Pentapetalae</taxon>
        <taxon>asterids</taxon>
        <taxon>lamiids</taxon>
        <taxon>Solanales</taxon>
        <taxon>Solanaceae</taxon>
        <taxon>Solanoideae</taxon>
        <taxon>Capsiceae</taxon>
        <taxon>Capsicum</taxon>
    </lineage>
</organism>
<feature type="initiator methionine" description="Removed" evidence="1">
    <location>
        <position position="1"/>
    </location>
</feature>
<feature type="chain" id="PRO_0000439389" description="Hypersensitive-induced reaction 1 protein" evidence="1">
    <location>
        <begin position="2"/>
        <end position="285"/>
    </location>
</feature>
<feature type="coiled-coil region" evidence="1">
    <location>
        <begin position="118"/>
        <end position="190"/>
    </location>
</feature>
<feature type="lipid moiety-binding region" description="N-myristoyl glycine" evidence="1">
    <location>
        <position position="2"/>
    </location>
</feature>
<feature type="mutagenesis site" description="Loss of hypersensitive cell death induction." evidence="2">
    <original>G</original>
    <variation>A</variation>
    <location>
        <position position="2"/>
    </location>
</feature>
<name>HIR1_CAPAN</name>